<name>SYP_RUEST</name>
<accession>Q1GFI1</accession>
<protein>
    <recommendedName>
        <fullName evidence="1">Proline--tRNA ligase</fullName>
        <ecNumber evidence="1">6.1.1.15</ecNumber>
    </recommendedName>
    <alternativeName>
        <fullName evidence="1">Prolyl-tRNA synthetase</fullName>
        <shortName evidence="1">ProRS</shortName>
    </alternativeName>
</protein>
<keyword id="KW-0030">Aminoacyl-tRNA synthetase</keyword>
<keyword id="KW-0067">ATP-binding</keyword>
<keyword id="KW-0963">Cytoplasm</keyword>
<keyword id="KW-0436">Ligase</keyword>
<keyword id="KW-0547">Nucleotide-binding</keyword>
<keyword id="KW-0648">Protein biosynthesis</keyword>
<keyword id="KW-1185">Reference proteome</keyword>
<sequence length="451" mass="51131">MRLSRYFLPVLKETPSEAQVVSHRYMLRAGMIKQSAAGIYSWLPLGYRVLKKIEGIVHEEQMRAGHIPMLMPTIQSADLWRESGRYDAYGEEMLRIRDRHDRDMLFTPTAEELITDIFRANVSSYKDLPLTMYQIQWKFRDEIRPRFGVMRGREFYMKDGYNFDLTKEDALHAYNRHLVTYLRTYERMGLQAIPMRADGGPIGGDYTHEFLVLAETGESEVFYDSEITDLTFGAREIDYDNVEQCQAVLEEFTSRYARTDETHDEALFNAVPEERRRVARGIEVGQIFYFGTKYSEALGATVQTADGQSVPVHMGSHGIGVSRLLGAIIEASHDDKGIIWPEGVTPFHCGIVNLKQGDDEADAACEQLYAALTAIGLEPLYDDRKERAGGKFASMDLIGLPWRITVGPRGLKNGVVEVTSRRTGESEEMSPEDAVKKIAAIYANHPTPRGF</sequence>
<organism>
    <name type="scientific">Ruegeria sp. (strain TM1040)</name>
    <name type="common">Silicibacter sp.</name>
    <dbReference type="NCBI Taxonomy" id="292414"/>
    <lineage>
        <taxon>Bacteria</taxon>
        <taxon>Pseudomonadati</taxon>
        <taxon>Pseudomonadota</taxon>
        <taxon>Alphaproteobacteria</taxon>
        <taxon>Rhodobacterales</taxon>
        <taxon>Roseobacteraceae</taxon>
        <taxon>Ruegeria</taxon>
    </lineage>
</organism>
<proteinExistence type="inferred from homology"/>
<evidence type="ECO:0000255" key="1">
    <source>
        <dbReference type="HAMAP-Rule" id="MF_01570"/>
    </source>
</evidence>
<gene>
    <name evidence="1" type="primary">proS</name>
    <name type="ordered locus">TM1040_1852</name>
</gene>
<dbReference type="EC" id="6.1.1.15" evidence="1"/>
<dbReference type="EMBL" id="CP000377">
    <property type="protein sequence ID" value="ABF64585.1"/>
    <property type="molecule type" value="Genomic_DNA"/>
</dbReference>
<dbReference type="RefSeq" id="WP_011539180.1">
    <property type="nucleotide sequence ID" value="NC_008044.1"/>
</dbReference>
<dbReference type="SMR" id="Q1GFI1"/>
<dbReference type="STRING" id="292414.TM1040_1852"/>
<dbReference type="KEGG" id="sit:TM1040_1852"/>
<dbReference type="eggNOG" id="COG0442">
    <property type="taxonomic scope" value="Bacteria"/>
</dbReference>
<dbReference type="HOGENOM" id="CLU_016739_4_2_5"/>
<dbReference type="OrthoDB" id="9809052at2"/>
<dbReference type="Proteomes" id="UP000000636">
    <property type="component" value="Chromosome"/>
</dbReference>
<dbReference type="GO" id="GO:0005829">
    <property type="term" value="C:cytosol"/>
    <property type="evidence" value="ECO:0007669"/>
    <property type="project" value="TreeGrafter"/>
</dbReference>
<dbReference type="GO" id="GO:0005524">
    <property type="term" value="F:ATP binding"/>
    <property type="evidence" value="ECO:0007669"/>
    <property type="project" value="UniProtKB-UniRule"/>
</dbReference>
<dbReference type="GO" id="GO:0004827">
    <property type="term" value="F:proline-tRNA ligase activity"/>
    <property type="evidence" value="ECO:0007669"/>
    <property type="project" value="UniProtKB-UniRule"/>
</dbReference>
<dbReference type="GO" id="GO:0006433">
    <property type="term" value="P:prolyl-tRNA aminoacylation"/>
    <property type="evidence" value="ECO:0007669"/>
    <property type="project" value="UniProtKB-UniRule"/>
</dbReference>
<dbReference type="CDD" id="cd00861">
    <property type="entry name" value="ProRS_anticodon_short"/>
    <property type="match status" value="1"/>
</dbReference>
<dbReference type="CDD" id="cd00779">
    <property type="entry name" value="ProRS_core_prok"/>
    <property type="match status" value="1"/>
</dbReference>
<dbReference type="FunFam" id="3.30.930.10:FF:000042">
    <property type="entry name" value="probable proline--tRNA ligase, mitochondrial"/>
    <property type="match status" value="1"/>
</dbReference>
<dbReference type="FunFam" id="3.40.50.800:FF:000032">
    <property type="entry name" value="Proline--tRNA ligase"/>
    <property type="match status" value="1"/>
</dbReference>
<dbReference type="Gene3D" id="3.40.50.800">
    <property type="entry name" value="Anticodon-binding domain"/>
    <property type="match status" value="1"/>
</dbReference>
<dbReference type="Gene3D" id="3.30.930.10">
    <property type="entry name" value="Bira Bifunctional Protein, Domain 2"/>
    <property type="match status" value="1"/>
</dbReference>
<dbReference type="HAMAP" id="MF_01570">
    <property type="entry name" value="Pro_tRNA_synth_type2"/>
    <property type="match status" value="1"/>
</dbReference>
<dbReference type="InterPro" id="IPR002314">
    <property type="entry name" value="aa-tRNA-synt_IIb"/>
</dbReference>
<dbReference type="InterPro" id="IPR006195">
    <property type="entry name" value="aa-tRNA-synth_II"/>
</dbReference>
<dbReference type="InterPro" id="IPR045864">
    <property type="entry name" value="aa-tRNA-synth_II/BPL/LPL"/>
</dbReference>
<dbReference type="InterPro" id="IPR004154">
    <property type="entry name" value="Anticodon-bd"/>
</dbReference>
<dbReference type="InterPro" id="IPR036621">
    <property type="entry name" value="Anticodon-bd_dom_sf"/>
</dbReference>
<dbReference type="InterPro" id="IPR002316">
    <property type="entry name" value="Pro-tRNA-ligase_IIa"/>
</dbReference>
<dbReference type="InterPro" id="IPR004500">
    <property type="entry name" value="Pro-tRNA-synth_IIa_bac-type"/>
</dbReference>
<dbReference type="InterPro" id="IPR050062">
    <property type="entry name" value="Pro-tRNA_synthetase"/>
</dbReference>
<dbReference type="InterPro" id="IPR023716">
    <property type="entry name" value="Prolyl-tRNA_ligase_IIa_type2"/>
</dbReference>
<dbReference type="InterPro" id="IPR044140">
    <property type="entry name" value="ProRS_anticodon_short"/>
</dbReference>
<dbReference type="InterPro" id="IPR033730">
    <property type="entry name" value="ProRS_core_prok"/>
</dbReference>
<dbReference type="NCBIfam" id="NF008979">
    <property type="entry name" value="PRK12325.1"/>
    <property type="match status" value="1"/>
</dbReference>
<dbReference type="NCBIfam" id="TIGR00409">
    <property type="entry name" value="proS_fam_II"/>
    <property type="match status" value="1"/>
</dbReference>
<dbReference type="PANTHER" id="PTHR42753">
    <property type="entry name" value="MITOCHONDRIAL RIBOSOME PROTEIN L39/PROLYL-TRNA LIGASE FAMILY MEMBER"/>
    <property type="match status" value="1"/>
</dbReference>
<dbReference type="PANTHER" id="PTHR42753:SF2">
    <property type="entry name" value="PROLINE--TRNA LIGASE"/>
    <property type="match status" value="1"/>
</dbReference>
<dbReference type="Pfam" id="PF03129">
    <property type="entry name" value="HGTP_anticodon"/>
    <property type="match status" value="1"/>
</dbReference>
<dbReference type="Pfam" id="PF00587">
    <property type="entry name" value="tRNA-synt_2b"/>
    <property type="match status" value="1"/>
</dbReference>
<dbReference type="PRINTS" id="PR01046">
    <property type="entry name" value="TRNASYNTHPRO"/>
</dbReference>
<dbReference type="SUPFAM" id="SSF52954">
    <property type="entry name" value="Class II aaRS ABD-related"/>
    <property type="match status" value="1"/>
</dbReference>
<dbReference type="SUPFAM" id="SSF55681">
    <property type="entry name" value="Class II aaRS and biotin synthetases"/>
    <property type="match status" value="1"/>
</dbReference>
<dbReference type="PROSITE" id="PS50862">
    <property type="entry name" value="AA_TRNA_LIGASE_II"/>
    <property type="match status" value="1"/>
</dbReference>
<reference key="1">
    <citation type="submission" date="2006-05" db="EMBL/GenBank/DDBJ databases">
        <title>Complete sequence of chromosome of Silicibacter sp. TM1040.</title>
        <authorList>
            <consortium name="US DOE Joint Genome Institute"/>
            <person name="Copeland A."/>
            <person name="Lucas S."/>
            <person name="Lapidus A."/>
            <person name="Barry K."/>
            <person name="Detter J.C."/>
            <person name="Glavina del Rio T."/>
            <person name="Hammon N."/>
            <person name="Israni S."/>
            <person name="Dalin E."/>
            <person name="Tice H."/>
            <person name="Pitluck S."/>
            <person name="Brettin T."/>
            <person name="Bruce D."/>
            <person name="Han C."/>
            <person name="Tapia R."/>
            <person name="Goodwin L."/>
            <person name="Thompson L.S."/>
            <person name="Gilna P."/>
            <person name="Schmutz J."/>
            <person name="Larimer F."/>
            <person name="Land M."/>
            <person name="Hauser L."/>
            <person name="Kyrpides N."/>
            <person name="Kim E."/>
            <person name="Belas R."/>
            <person name="Moran M.A."/>
            <person name="Buchan A."/>
            <person name="Gonzalez J.M."/>
            <person name="Schell M.A."/>
            <person name="Sun F."/>
            <person name="Richardson P."/>
        </authorList>
    </citation>
    <scope>NUCLEOTIDE SEQUENCE [LARGE SCALE GENOMIC DNA]</scope>
    <source>
        <strain>TM1040</strain>
    </source>
</reference>
<comment type="function">
    <text evidence="1">Catalyzes the attachment of proline to tRNA(Pro) in a two-step reaction: proline is first activated by ATP to form Pro-AMP and then transferred to the acceptor end of tRNA(Pro).</text>
</comment>
<comment type="catalytic activity">
    <reaction evidence="1">
        <text>tRNA(Pro) + L-proline + ATP = L-prolyl-tRNA(Pro) + AMP + diphosphate</text>
        <dbReference type="Rhea" id="RHEA:14305"/>
        <dbReference type="Rhea" id="RHEA-COMP:9700"/>
        <dbReference type="Rhea" id="RHEA-COMP:9702"/>
        <dbReference type="ChEBI" id="CHEBI:30616"/>
        <dbReference type="ChEBI" id="CHEBI:33019"/>
        <dbReference type="ChEBI" id="CHEBI:60039"/>
        <dbReference type="ChEBI" id="CHEBI:78442"/>
        <dbReference type="ChEBI" id="CHEBI:78532"/>
        <dbReference type="ChEBI" id="CHEBI:456215"/>
        <dbReference type="EC" id="6.1.1.15"/>
    </reaction>
</comment>
<comment type="subunit">
    <text evidence="1">Homodimer.</text>
</comment>
<comment type="subcellular location">
    <subcellularLocation>
        <location evidence="1">Cytoplasm</location>
    </subcellularLocation>
</comment>
<comment type="similarity">
    <text evidence="1">Belongs to the class-II aminoacyl-tRNA synthetase family. ProS type 2 subfamily.</text>
</comment>
<feature type="chain" id="PRO_0000288402" description="Proline--tRNA ligase">
    <location>
        <begin position="1"/>
        <end position="451"/>
    </location>
</feature>